<keyword id="KW-0342">GTP-binding</keyword>
<keyword id="KW-0378">Hydrolase</keyword>
<keyword id="KW-0479">Metal-binding</keyword>
<keyword id="KW-0547">Nucleotide-binding</keyword>
<keyword id="KW-0554">One-carbon metabolism</keyword>
<keyword id="KW-0862">Zinc</keyword>
<accession>Q92A75</accession>
<proteinExistence type="inferred from homology"/>
<organism>
    <name type="scientific">Listeria innocua serovar 6a (strain ATCC BAA-680 / CLIP 11262)</name>
    <dbReference type="NCBI Taxonomy" id="272626"/>
    <lineage>
        <taxon>Bacteria</taxon>
        <taxon>Bacillati</taxon>
        <taxon>Bacillota</taxon>
        <taxon>Bacilli</taxon>
        <taxon>Bacillales</taxon>
        <taxon>Listeriaceae</taxon>
        <taxon>Listeria</taxon>
    </lineage>
</organism>
<gene>
    <name evidence="2" type="primary">folE</name>
    <name type="ordered locus">lin2047</name>
</gene>
<feature type="chain" id="PRO_0000119419" description="GTP cyclohydrolase 1">
    <location>
        <begin position="1"/>
        <end position="189"/>
    </location>
</feature>
<feature type="binding site" evidence="2">
    <location>
        <position position="78"/>
    </location>
    <ligand>
        <name>Zn(2+)</name>
        <dbReference type="ChEBI" id="CHEBI:29105"/>
    </ligand>
</feature>
<feature type="binding site" evidence="2">
    <location>
        <position position="81"/>
    </location>
    <ligand>
        <name>Zn(2+)</name>
        <dbReference type="ChEBI" id="CHEBI:29105"/>
    </ligand>
</feature>
<feature type="binding site" evidence="2">
    <location>
        <position position="150"/>
    </location>
    <ligand>
        <name>Zn(2+)</name>
        <dbReference type="ChEBI" id="CHEBI:29105"/>
    </ligand>
</feature>
<dbReference type="EC" id="3.5.4.16" evidence="2"/>
<dbReference type="EMBL" id="AL596170">
    <property type="protein sequence ID" value="CAC97277.1"/>
    <property type="molecule type" value="Genomic_DNA"/>
</dbReference>
<dbReference type="PIR" id="AE1688">
    <property type="entry name" value="AE1688"/>
</dbReference>
<dbReference type="RefSeq" id="WP_003767576.1">
    <property type="nucleotide sequence ID" value="NC_003212.1"/>
</dbReference>
<dbReference type="SMR" id="Q92A75"/>
<dbReference type="STRING" id="272626.gene:17566405"/>
<dbReference type="GeneID" id="93235386"/>
<dbReference type="KEGG" id="lin:lin2047"/>
<dbReference type="eggNOG" id="COG0302">
    <property type="taxonomic scope" value="Bacteria"/>
</dbReference>
<dbReference type="HOGENOM" id="CLU_049768_3_3_9"/>
<dbReference type="OrthoDB" id="9801207at2"/>
<dbReference type="UniPathway" id="UPA00848">
    <property type="reaction ID" value="UER00151"/>
</dbReference>
<dbReference type="Proteomes" id="UP000002513">
    <property type="component" value="Chromosome"/>
</dbReference>
<dbReference type="GO" id="GO:0005737">
    <property type="term" value="C:cytoplasm"/>
    <property type="evidence" value="ECO:0007669"/>
    <property type="project" value="TreeGrafter"/>
</dbReference>
<dbReference type="GO" id="GO:0005525">
    <property type="term" value="F:GTP binding"/>
    <property type="evidence" value="ECO:0007669"/>
    <property type="project" value="UniProtKB-KW"/>
</dbReference>
<dbReference type="GO" id="GO:0003934">
    <property type="term" value="F:GTP cyclohydrolase I activity"/>
    <property type="evidence" value="ECO:0007669"/>
    <property type="project" value="UniProtKB-UniRule"/>
</dbReference>
<dbReference type="GO" id="GO:0008270">
    <property type="term" value="F:zinc ion binding"/>
    <property type="evidence" value="ECO:0007669"/>
    <property type="project" value="UniProtKB-UniRule"/>
</dbReference>
<dbReference type="GO" id="GO:0006730">
    <property type="term" value="P:one-carbon metabolic process"/>
    <property type="evidence" value="ECO:0007669"/>
    <property type="project" value="UniProtKB-UniRule"/>
</dbReference>
<dbReference type="GO" id="GO:0006729">
    <property type="term" value="P:tetrahydrobiopterin biosynthetic process"/>
    <property type="evidence" value="ECO:0007669"/>
    <property type="project" value="TreeGrafter"/>
</dbReference>
<dbReference type="GO" id="GO:0046654">
    <property type="term" value="P:tetrahydrofolate biosynthetic process"/>
    <property type="evidence" value="ECO:0007669"/>
    <property type="project" value="UniProtKB-UniRule"/>
</dbReference>
<dbReference type="FunFam" id="1.10.286.10:FF:000001">
    <property type="entry name" value="GTP cyclohydrolase 1"/>
    <property type="match status" value="1"/>
</dbReference>
<dbReference type="FunFam" id="3.30.1130.10:FF:000001">
    <property type="entry name" value="GTP cyclohydrolase 1"/>
    <property type="match status" value="1"/>
</dbReference>
<dbReference type="Gene3D" id="1.10.286.10">
    <property type="match status" value="1"/>
</dbReference>
<dbReference type="Gene3D" id="3.30.1130.10">
    <property type="match status" value="1"/>
</dbReference>
<dbReference type="HAMAP" id="MF_00223">
    <property type="entry name" value="FolE"/>
    <property type="match status" value="1"/>
</dbReference>
<dbReference type="InterPro" id="IPR043133">
    <property type="entry name" value="GTP-CH-I_C/QueF"/>
</dbReference>
<dbReference type="InterPro" id="IPR043134">
    <property type="entry name" value="GTP-CH-I_N"/>
</dbReference>
<dbReference type="InterPro" id="IPR001474">
    <property type="entry name" value="GTP_CycHdrlase_I"/>
</dbReference>
<dbReference type="InterPro" id="IPR018234">
    <property type="entry name" value="GTP_CycHdrlase_I_CS"/>
</dbReference>
<dbReference type="InterPro" id="IPR020602">
    <property type="entry name" value="GTP_CycHdrlase_I_dom"/>
</dbReference>
<dbReference type="NCBIfam" id="TIGR00063">
    <property type="entry name" value="folE"/>
    <property type="match status" value="1"/>
</dbReference>
<dbReference type="NCBIfam" id="NF006825">
    <property type="entry name" value="PRK09347.1-2"/>
    <property type="match status" value="1"/>
</dbReference>
<dbReference type="NCBIfam" id="NF006826">
    <property type="entry name" value="PRK09347.1-3"/>
    <property type="match status" value="1"/>
</dbReference>
<dbReference type="PANTHER" id="PTHR11109:SF7">
    <property type="entry name" value="GTP CYCLOHYDROLASE 1"/>
    <property type="match status" value="1"/>
</dbReference>
<dbReference type="PANTHER" id="PTHR11109">
    <property type="entry name" value="GTP CYCLOHYDROLASE I"/>
    <property type="match status" value="1"/>
</dbReference>
<dbReference type="Pfam" id="PF01227">
    <property type="entry name" value="GTP_cyclohydroI"/>
    <property type="match status" value="1"/>
</dbReference>
<dbReference type="SUPFAM" id="SSF55620">
    <property type="entry name" value="Tetrahydrobiopterin biosynthesis enzymes-like"/>
    <property type="match status" value="1"/>
</dbReference>
<dbReference type="PROSITE" id="PS00859">
    <property type="entry name" value="GTP_CYCLOHYDROL_1_1"/>
    <property type="match status" value="1"/>
</dbReference>
<dbReference type="PROSITE" id="PS00860">
    <property type="entry name" value="GTP_CYCLOHYDROL_1_2"/>
    <property type="match status" value="1"/>
</dbReference>
<name>GCH1_LISIN</name>
<sequence length="189" mass="21321">MEQIDKQKIADAVKVILEAVGENPEREGLIDTPMRVARMYEEVFAGLKKDPSVHFDTIFEEQHEELVLVKDIRFSSMCEHHLVPFFGVAHVAYLPQNGRVAGLSKLARVVDDVSRRPQLQERITTTVAEIMMDKLKPLGVMVIMEAEHMCMTIRGVNKPGTKTITSAVRGAFKNDDKLRSEVLALIKHN</sequence>
<protein>
    <recommendedName>
        <fullName evidence="2">GTP cyclohydrolase 1</fullName>
        <ecNumber evidence="2">3.5.4.16</ecNumber>
    </recommendedName>
    <alternativeName>
        <fullName evidence="2">GTP cyclohydrolase I</fullName>
        <shortName evidence="2">GTP-CH-I</shortName>
    </alternativeName>
</protein>
<comment type="catalytic activity">
    <reaction evidence="2">
        <text>GTP + H2O = 7,8-dihydroneopterin 3'-triphosphate + formate + H(+)</text>
        <dbReference type="Rhea" id="RHEA:17473"/>
        <dbReference type="ChEBI" id="CHEBI:15377"/>
        <dbReference type="ChEBI" id="CHEBI:15378"/>
        <dbReference type="ChEBI" id="CHEBI:15740"/>
        <dbReference type="ChEBI" id="CHEBI:37565"/>
        <dbReference type="ChEBI" id="CHEBI:58462"/>
        <dbReference type="EC" id="3.5.4.16"/>
    </reaction>
</comment>
<comment type="pathway">
    <text evidence="2">Cofactor biosynthesis; 7,8-dihydroneopterin triphosphate biosynthesis; 7,8-dihydroneopterin triphosphate from GTP: step 1/1.</text>
</comment>
<comment type="subunit">
    <text evidence="1">Toroid-shaped homodecamer, composed of two pentamers of five dimers.</text>
</comment>
<comment type="similarity">
    <text evidence="2">Belongs to the GTP cyclohydrolase I family.</text>
</comment>
<evidence type="ECO:0000250" key="1"/>
<evidence type="ECO:0000255" key="2">
    <source>
        <dbReference type="HAMAP-Rule" id="MF_00223"/>
    </source>
</evidence>
<reference key="1">
    <citation type="journal article" date="2001" name="Science">
        <title>Comparative genomics of Listeria species.</title>
        <authorList>
            <person name="Glaser P."/>
            <person name="Frangeul L."/>
            <person name="Buchrieser C."/>
            <person name="Rusniok C."/>
            <person name="Amend A."/>
            <person name="Baquero F."/>
            <person name="Berche P."/>
            <person name="Bloecker H."/>
            <person name="Brandt P."/>
            <person name="Chakraborty T."/>
            <person name="Charbit A."/>
            <person name="Chetouani F."/>
            <person name="Couve E."/>
            <person name="de Daruvar A."/>
            <person name="Dehoux P."/>
            <person name="Domann E."/>
            <person name="Dominguez-Bernal G."/>
            <person name="Duchaud E."/>
            <person name="Durant L."/>
            <person name="Dussurget O."/>
            <person name="Entian K.-D."/>
            <person name="Fsihi H."/>
            <person name="Garcia-del Portillo F."/>
            <person name="Garrido P."/>
            <person name="Gautier L."/>
            <person name="Goebel W."/>
            <person name="Gomez-Lopez N."/>
            <person name="Hain T."/>
            <person name="Hauf J."/>
            <person name="Jackson D."/>
            <person name="Jones L.-M."/>
            <person name="Kaerst U."/>
            <person name="Kreft J."/>
            <person name="Kuhn M."/>
            <person name="Kunst F."/>
            <person name="Kurapkat G."/>
            <person name="Madueno E."/>
            <person name="Maitournam A."/>
            <person name="Mata Vicente J."/>
            <person name="Ng E."/>
            <person name="Nedjari H."/>
            <person name="Nordsiek G."/>
            <person name="Novella S."/>
            <person name="de Pablos B."/>
            <person name="Perez-Diaz J.-C."/>
            <person name="Purcell R."/>
            <person name="Remmel B."/>
            <person name="Rose M."/>
            <person name="Schlueter T."/>
            <person name="Simoes N."/>
            <person name="Tierrez A."/>
            <person name="Vazquez-Boland J.-A."/>
            <person name="Voss H."/>
            <person name="Wehland J."/>
            <person name="Cossart P."/>
        </authorList>
    </citation>
    <scope>NUCLEOTIDE SEQUENCE [LARGE SCALE GENOMIC DNA]</scope>
    <source>
        <strain>ATCC BAA-680 / CLIP 11262</strain>
    </source>
</reference>